<comment type="subunit">
    <text>The pili are polar flexible filaments of about 5.4 nanometers diameter and 2.5 micrometers average length; they consist of only a single polypeptide chain arranged in a helical configuration of five subunits per turn in the assembled pilus.</text>
</comment>
<comment type="subcellular location">
    <subcellularLocation>
        <location>Fimbrium</location>
    </subcellularLocation>
    <subcellularLocation>
        <location evidence="2">Membrane</location>
        <topology evidence="2">Single-pass membrane protein</topology>
    </subcellularLocation>
</comment>
<comment type="similarity">
    <text evidence="4">Belongs to the N-Me-Phe pilin family.</text>
</comment>
<keyword id="KW-1015">Disulfide bond</keyword>
<keyword id="KW-0281">Fimbrium</keyword>
<keyword id="KW-0472">Membrane</keyword>
<keyword id="KW-0488">Methylation</keyword>
<keyword id="KW-0812">Transmembrane</keyword>
<keyword id="KW-1133">Transmembrane helix</keyword>
<accession>P17417</accession>
<feature type="propeptide" id="PRO_0000024146" description="Leader sequence" evidence="3">
    <location>
        <begin position="1"/>
        <end position="6"/>
    </location>
</feature>
<feature type="chain" id="PRO_0000024147" description="Probable minor fimbrial protein">
    <location>
        <begin position="7"/>
        <end position="159"/>
    </location>
</feature>
<feature type="transmembrane region" description="Helical" evidence="2">
    <location>
        <begin position="7"/>
        <end position="27"/>
    </location>
</feature>
<feature type="modified residue" description="N-methylphenylalanine" evidence="3">
    <location>
        <position position="7"/>
    </location>
</feature>
<feature type="disulfide bond" evidence="1">
    <location>
        <begin position="56"/>
        <end position="71"/>
    </location>
</feature>
<feature type="disulfide bond" evidence="1">
    <location>
        <begin position="140"/>
        <end position="153"/>
    </location>
</feature>
<protein>
    <recommendedName>
        <fullName>Probable minor fimbrial protein</fullName>
        <shortName>Pilin</shortName>
    </recommendedName>
    <alternativeName>
        <fullName>Serogroup H1</fullName>
    </alternativeName>
</protein>
<gene>
    <name type="primary">fimZ</name>
</gene>
<sequence length="159" mass="17188">MKKMHGFTLIELMIVVAIIGVLASTALMQYQNFVVRSQVTRVLMEAGELRLAVEQCLNDGTTKIGNGQNECDPRASGSNIISGASQNPEIVIAANTGVVQFPNPLTEETALTATFNNSAASIIHGKKLIWQRQKSGSWYCHSNAAEKFLPSGCKYDASL</sequence>
<evidence type="ECO:0000250" key="1"/>
<evidence type="ECO:0000255" key="2"/>
<evidence type="ECO:0000255" key="3">
    <source>
        <dbReference type="PROSITE-ProRule" id="PRU01070"/>
    </source>
</evidence>
<evidence type="ECO:0000305" key="4"/>
<proteinExistence type="inferred from homology"/>
<dbReference type="EMBL" id="X52390">
    <property type="protein sequence ID" value="CAA36622.1"/>
    <property type="molecule type" value="Genomic_DNA"/>
</dbReference>
<dbReference type="PIR" id="S15251">
    <property type="entry name" value="YQBZHZ"/>
</dbReference>
<dbReference type="SMR" id="P17417"/>
<dbReference type="GO" id="GO:0016020">
    <property type="term" value="C:membrane"/>
    <property type="evidence" value="ECO:0007669"/>
    <property type="project" value="UniProtKB-SubCell"/>
</dbReference>
<dbReference type="GO" id="GO:0009289">
    <property type="term" value="C:pilus"/>
    <property type="evidence" value="ECO:0007669"/>
    <property type="project" value="UniProtKB-SubCell"/>
</dbReference>
<dbReference type="GO" id="GO:0007155">
    <property type="term" value="P:cell adhesion"/>
    <property type="evidence" value="ECO:0007669"/>
    <property type="project" value="InterPro"/>
</dbReference>
<dbReference type="Gene3D" id="3.30.700.10">
    <property type="entry name" value="Glycoprotein, Type 4 Pilin"/>
    <property type="match status" value="1"/>
</dbReference>
<dbReference type="InterPro" id="IPR012902">
    <property type="entry name" value="N_methyl_site"/>
</dbReference>
<dbReference type="InterPro" id="IPR001082">
    <property type="entry name" value="Pilin"/>
</dbReference>
<dbReference type="InterPro" id="IPR045584">
    <property type="entry name" value="Pilin-like"/>
</dbReference>
<dbReference type="InterPro" id="IPR050470">
    <property type="entry name" value="T4P/T2SS_Core"/>
</dbReference>
<dbReference type="NCBIfam" id="TIGR02532">
    <property type="entry name" value="IV_pilin_GFxxxE"/>
    <property type="match status" value="1"/>
</dbReference>
<dbReference type="PANTHER" id="PTHR30093">
    <property type="entry name" value="GENERAL SECRETION PATHWAY PROTEIN G"/>
    <property type="match status" value="1"/>
</dbReference>
<dbReference type="PANTHER" id="PTHR30093:SF34">
    <property type="entry name" value="PREPILIN PEPTIDASE-DEPENDENT PROTEIN D"/>
    <property type="match status" value="1"/>
</dbReference>
<dbReference type="Pfam" id="PF07963">
    <property type="entry name" value="N_methyl"/>
    <property type="match status" value="1"/>
</dbReference>
<dbReference type="Pfam" id="PF00114">
    <property type="entry name" value="Pilin"/>
    <property type="match status" value="1"/>
</dbReference>
<dbReference type="SUPFAM" id="SSF54523">
    <property type="entry name" value="Pili subunits"/>
    <property type="match status" value="1"/>
</dbReference>
<dbReference type="PROSITE" id="PS00409">
    <property type="entry name" value="PROKAR_NTER_METHYL"/>
    <property type="match status" value="1"/>
</dbReference>
<organism>
    <name type="scientific">Dichelobacter nodosus</name>
    <name type="common">Bacteroides nodosus</name>
    <dbReference type="NCBI Taxonomy" id="870"/>
    <lineage>
        <taxon>Bacteria</taxon>
        <taxon>Pseudomonadati</taxon>
        <taxon>Pseudomonadota</taxon>
        <taxon>Gammaproteobacteria</taxon>
        <taxon>Cardiobacteriales</taxon>
        <taxon>Cardiobacteriaceae</taxon>
        <taxon>Dichelobacter</taxon>
    </lineage>
</organism>
<reference key="1">
    <citation type="journal article" date="1991" name="Mol. Microbiol.">
        <title>Organization of the fimbrial gene region of Bacteroides nodosus: class I and class II strains.</title>
        <authorList>
            <person name="Hobbs M."/>
            <person name="Dalrymple B.P."/>
            <person name="Cox P.T."/>
            <person name="Livingstone S.P."/>
            <person name="Delaney S.F."/>
            <person name="Mattick J.S."/>
        </authorList>
    </citation>
    <scope>NUCLEOTIDE SEQUENCE [GENOMIC DNA]</scope>
    <source>
        <strain>Serogroup H1 isolate VCS1215</strain>
    </source>
</reference>
<name>FMZH_DICNO</name>